<keyword id="KW-0012">Acyltransferase</keyword>
<keyword id="KW-0133">Cell shape</keyword>
<keyword id="KW-0961">Cell wall biogenesis/degradation</keyword>
<keyword id="KW-0963">Cytoplasm</keyword>
<keyword id="KW-0460">Magnesium</keyword>
<keyword id="KW-0479">Metal-binding</keyword>
<keyword id="KW-0511">Multifunctional enzyme</keyword>
<keyword id="KW-0548">Nucleotidyltransferase</keyword>
<keyword id="KW-0573">Peptidoglycan synthesis</keyword>
<keyword id="KW-1185">Reference proteome</keyword>
<keyword id="KW-0677">Repeat</keyword>
<keyword id="KW-0808">Transferase</keyword>
<dbReference type="EC" id="2.7.7.23" evidence="1"/>
<dbReference type="EC" id="2.3.1.157" evidence="1"/>
<dbReference type="EMBL" id="CP001389">
    <property type="protein sequence ID" value="ACP25236.1"/>
    <property type="molecule type" value="Genomic_DNA"/>
</dbReference>
<dbReference type="RefSeq" id="WP_012708010.1">
    <property type="nucleotide sequence ID" value="NC_012587.1"/>
</dbReference>
<dbReference type="RefSeq" id="YP_002825989.1">
    <property type="nucleotide sequence ID" value="NC_012587.1"/>
</dbReference>
<dbReference type="SMR" id="C3MCF7"/>
<dbReference type="STRING" id="394.NGR_c14640"/>
<dbReference type="KEGG" id="rhi:NGR_c14640"/>
<dbReference type="PATRIC" id="fig|394.7.peg.4276"/>
<dbReference type="eggNOG" id="COG1207">
    <property type="taxonomic scope" value="Bacteria"/>
</dbReference>
<dbReference type="HOGENOM" id="CLU_029499_15_2_5"/>
<dbReference type="OrthoDB" id="9775031at2"/>
<dbReference type="UniPathway" id="UPA00113">
    <property type="reaction ID" value="UER00532"/>
</dbReference>
<dbReference type="UniPathway" id="UPA00113">
    <property type="reaction ID" value="UER00533"/>
</dbReference>
<dbReference type="UniPathway" id="UPA00973"/>
<dbReference type="Proteomes" id="UP000001054">
    <property type="component" value="Chromosome"/>
</dbReference>
<dbReference type="GO" id="GO:0005737">
    <property type="term" value="C:cytoplasm"/>
    <property type="evidence" value="ECO:0007669"/>
    <property type="project" value="UniProtKB-SubCell"/>
</dbReference>
<dbReference type="GO" id="GO:0016020">
    <property type="term" value="C:membrane"/>
    <property type="evidence" value="ECO:0007669"/>
    <property type="project" value="GOC"/>
</dbReference>
<dbReference type="GO" id="GO:0019134">
    <property type="term" value="F:glucosamine-1-phosphate N-acetyltransferase activity"/>
    <property type="evidence" value="ECO:0007669"/>
    <property type="project" value="UniProtKB-UniRule"/>
</dbReference>
<dbReference type="GO" id="GO:0000287">
    <property type="term" value="F:magnesium ion binding"/>
    <property type="evidence" value="ECO:0007669"/>
    <property type="project" value="UniProtKB-UniRule"/>
</dbReference>
<dbReference type="GO" id="GO:0003977">
    <property type="term" value="F:UDP-N-acetylglucosamine diphosphorylase activity"/>
    <property type="evidence" value="ECO:0007669"/>
    <property type="project" value="UniProtKB-UniRule"/>
</dbReference>
<dbReference type="GO" id="GO:0000902">
    <property type="term" value="P:cell morphogenesis"/>
    <property type="evidence" value="ECO:0007669"/>
    <property type="project" value="UniProtKB-UniRule"/>
</dbReference>
<dbReference type="GO" id="GO:0071555">
    <property type="term" value="P:cell wall organization"/>
    <property type="evidence" value="ECO:0007669"/>
    <property type="project" value="UniProtKB-KW"/>
</dbReference>
<dbReference type="GO" id="GO:0009245">
    <property type="term" value="P:lipid A biosynthetic process"/>
    <property type="evidence" value="ECO:0007669"/>
    <property type="project" value="UniProtKB-UniRule"/>
</dbReference>
<dbReference type="GO" id="GO:0009252">
    <property type="term" value="P:peptidoglycan biosynthetic process"/>
    <property type="evidence" value="ECO:0007669"/>
    <property type="project" value="UniProtKB-UniRule"/>
</dbReference>
<dbReference type="GO" id="GO:0008360">
    <property type="term" value="P:regulation of cell shape"/>
    <property type="evidence" value="ECO:0007669"/>
    <property type="project" value="UniProtKB-KW"/>
</dbReference>
<dbReference type="GO" id="GO:0006048">
    <property type="term" value="P:UDP-N-acetylglucosamine biosynthetic process"/>
    <property type="evidence" value="ECO:0007669"/>
    <property type="project" value="UniProtKB-UniPathway"/>
</dbReference>
<dbReference type="CDD" id="cd02540">
    <property type="entry name" value="GT2_GlmU_N_bac"/>
    <property type="match status" value="1"/>
</dbReference>
<dbReference type="CDD" id="cd03353">
    <property type="entry name" value="LbH_GlmU_C"/>
    <property type="match status" value="1"/>
</dbReference>
<dbReference type="Gene3D" id="2.160.10.10">
    <property type="entry name" value="Hexapeptide repeat proteins"/>
    <property type="match status" value="1"/>
</dbReference>
<dbReference type="Gene3D" id="3.90.550.10">
    <property type="entry name" value="Spore Coat Polysaccharide Biosynthesis Protein SpsA, Chain A"/>
    <property type="match status" value="1"/>
</dbReference>
<dbReference type="HAMAP" id="MF_01631">
    <property type="entry name" value="GlmU"/>
    <property type="match status" value="1"/>
</dbReference>
<dbReference type="InterPro" id="IPR005882">
    <property type="entry name" value="Bifunctional_GlmU"/>
</dbReference>
<dbReference type="InterPro" id="IPR050065">
    <property type="entry name" value="GlmU-like"/>
</dbReference>
<dbReference type="InterPro" id="IPR038009">
    <property type="entry name" value="GlmU_C_LbH"/>
</dbReference>
<dbReference type="InterPro" id="IPR001451">
    <property type="entry name" value="Hexapep"/>
</dbReference>
<dbReference type="InterPro" id="IPR018357">
    <property type="entry name" value="Hexapep_transf_CS"/>
</dbReference>
<dbReference type="InterPro" id="IPR025877">
    <property type="entry name" value="MobA-like_NTP_Trfase"/>
</dbReference>
<dbReference type="InterPro" id="IPR029044">
    <property type="entry name" value="Nucleotide-diphossugar_trans"/>
</dbReference>
<dbReference type="InterPro" id="IPR011004">
    <property type="entry name" value="Trimer_LpxA-like_sf"/>
</dbReference>
<dbReference type="NCBIfam" id="TIGR01173">
    <property type="entry name" value="glmU"/>
    <property type="match status" value="1"/>
</dbReference>
<dbReference type="NCBIfam" id="NF010933">
    <property type="entry name" value="PRK14353.1"/>
    <property type="match status" value="1"/>
</dbReference>
<dbReference type="PANTHER" id="PTHR43584:SF3">
    <property type="entry name" value="BIFUNCTIONAL PROTEIN GLMU"/>
    <property type="match status" value="1"/>
</dbReference>
<dbReference type="PANTHER" id="PTHR43584">
    <property type="entry name" value="NUCLEOTIDYL TRANSFERASE"/>
    <property type="match status" value="1"/>
</dbReference>
<dbReference type="Pfam" id="PF00132">
    <property type="entry name" value="Hexapep"/>
    <property type="match status" value="1"/>
</dbReference>
<dbReference type="Pfam" id="PF12804">
    <property type="entry name" value="NTP_transf_3"/>
    <property type="match status" value="1"/>
</dbReference>
<dbReference type="SUPFAM" id="SSF53448">
    <property type="entry name" value="Nucleotide-diphospho-sugar transferases"/>
    <property type="match status" value="1"/>
</dbReference>
<dbReference type="SUPFAM" id="SSF51161">
    <property type="entry name" value="Trimeric LpxA-like enzymes"/>
    <property type="match status" value="1"/>
</dbReference>
<dbReference type="PROSITE" id="PS00101">
    <property type="entry name" value="HEXAPEP_TRANSFERASES"/>
    <property type="match status" value="1"/>
</dbReference>
<gene>
    <name evidence="1" type="primary">glmU</name>
    <name type="ordered locus">NGR_c14640</name>
</gene>
<feature type="chain" id="PRO_1000186477" description="Bifunctional protein GlmU">
    <location>
        <begin position="1"/>
        <end position="456"/>
    </location>
</feature>
<feature type="region of interest" description="Pyrophosphorylase" evidence="1">
    <location>
        <begin position="1"/>
        <end position="231"/>
    </location>
</feature>
<feature type="region of interest" description="Linker" evidence="1">
    <location>
        <begin position="232"/>
        <end position="252"/>
    </location>
</feature>
<feature type="region of interest" description="N-acetyltransferase" evidence="1">
    <location>
        <begin position="253"/>
        <end position="456"/>
    </location>
</feature>
<feature type="active site" description="Proton acceptor" evidence="1">
    <location>
        <position position="348"/>
    </location>
</feature>
<feature type="binding site" evidence="1">
    <location>
        <begin position="10"/>
        <end position="13"/>
    </location>
    <ligand>
        <name>UDP-N-acetyl-alpha-D-glucosamine</name>
        <dbReference type="ChEBI" id="CHEBI:57705"/>
    </ligand>
</feature>
<feature type="binding site" evidence="1">
    <location>
        <position position="24"/>
    </location>
    <ligand>
        <name>UDP-N-acetyl-alpha-D-glucosamine</name>
        <dbReference type="ChEBI" id="CHEBI:57705"/>
    </ligand>
</feature>
<feature type="binding site" evidence="1">
    <location>
        <position position="77"/>
    </location>
    <ligand>
        <name>UDP-N-acetyl-alpha-D-glucosamine</name>
        <dbReference type="ChEBI" id="CHEBI:57705"/>
    </ligand>
</feature>
<feature type="binding site" evidence="1">
    <location>
        <begin position="82"/>
        <end position="83"/>
    </location>
    <ligand>
        <name>UDP-N-acetyl-alpha-D-glucosamine</name>
        <dbReference type="ChEBI" id="CHEBI:57705"/>
    </ligand>
</feature>
<feature type="binding site" evidence="1">
    <location>
        <position position="107"/>
    </location>
    <ligand>
        <name>Mg(2+)</name>
        <dbReference type="ChEBI" id="CHEBI:18420"/>
    </ligand>
</feature>
<feature type="binding site" evidence="1">
    <location>
        <position position="143"/>
    </location>
    <ligand>
        <name>UDP-N-acetyl-alpha-D-glucosamine</name>
        <dbReference type="ChEBI" id="CHEBI:57705"/>
    </ligand>
</feature>
<feature type="binding site" evidence="1">
    <location>
        <position position="157"/>
    </location>
    <ligand>
        <name>UDP-N-acetyl-alpha-D-glucosamine</name>
        <dbReference type="ChEBI" id="CHEBI:57705"/>
    </ligand>
</feature>
<feature type="binding site" evidence="1">
    <location>
        <position position="172"/>
    </location>
    <ligand>
        <name>UDP-N-acetyl-alpha-D-glucosamine</name>
        <dbReference type="ChEBI" id="CHEBI:57705"/>
    </ligand>
</feature>
<feature type="binding site" evidence="1">
    <location>
        <position position="229"/>
    </location>
    <ligand>
        <name>Mg(2+)</name>
        <dbReference type="ChEBI" id="CHEBI:18420"/>
    </ligand>
</feature>
<feature type="binding site" evidence="1">
    <location>
        <position position="229"/>
    </location>
    <ligand>
        <name>UDP-N-acetyl-alpha-D-glucosamine</name>
        <dbReference type="ChEBI" id="CHEBI:57705"/>
    </ligand>
</feature>
<feature type="binding site" evidence="1">
    <location>
        <position position="318"/>
    </location>
    <ligand>
        <name>UDP-N-acetyl-alpha-D-glucosamine</name>
        <dbReference type="ChEBI" id="CHEBI:57705"/>
    </ligand>
</feature>
<feature type="binding site" evidence="1">
    <location>
        <position position="336"/>
    </location>
    <ligand>
        <name>UDP-N-acetyl-alpha-D-glucosamine</name>
        <dbReference type="ChEBI" id="CHEBI:57705"/>
    </ligand>
</feature>
<feature type="binding site" evidence="1">
    <location>
        <position position="351"/>
    </location>
    <ligand>
        <name>UDP-N-acetyl-alpha-D-glucosamine</name>
        <dbReference type="ChEBI" id="CHEBI:57705"/>
    </ligand>
</feature>
<feature type="binding site" evidence="1">
    <location>
        <position position="362"/>
    </location>
    <ligand>
        <name>UDP-N-acetyl-alpha-D-glucosamine</name>
        <dbReference type="ChEBI" id="CHEBI:57705"/>
    </ligand>
</feature>
<feature type="binding site" evidence="1">
    <location>
        <position position="365"/>
    </location>
    <ligand>
        <name>acetyl-CoA</name>
        <dbReference type="ChEBI" id="CHEBI:57288"/>
    </ligand>
</feature>
<feature type="binding site" evidence="1">
    <location>
        <begin position="371"/>
        <end position="372"/>
    </location>
    <ligand>
        <name>acetyl-CoA</name>
        <dbReference type="ChEBI" id="CHEBI:57288"/>
    </ligand>
</feature>
<feature type="binding site" evidence="1">
    <location>
        <position position="390"/>
    </location>
    <ligand>
        <name>acetyl-CoA</name>
        <dbReference type="ChEBI" id="CHEBI:57288"/>
    </ligand>
</feature>
<feature type="binding site" evidence="1">
    <location>
        <position position="408"/>
    </location>
    <ligand>
        <name>acetyl-CoA</name>
        <dbReference type="ChEBI" id="CHEBI:57288"/>
    </ligand>
</feature>
<feature type="binding site" evidence="1">
    <location>
        <position position="425"/>
    </location>
    <ligand>
        <name>acetyl-CoA</name>
        <dbReference type="ChEBI" id="CHEBI:57288"/>
    </ligand>
</feature>
<evidence type="ECO:0000255" key="1">
    <source>
        <dbReference type="HAMAP-Rule" id="MF_01631"/>
    </source>
</evidence>
<comment type="function">
    <text evidence="1">Catalyzes the last two sequential reactions in the de novo biosynthetic pathway for UDP-N-acetylglucosamine (UDP-GlcNAc). The C-terminal domain catalyzes the transfer of acetyl group from acetyl coenzyme A to glucosamine-1-phosphate (GlcN-1-P) to produce N-acetylglucosamine-1-phosphate (GlcNAc-1-P), which is converted into UDP-GlcNAc by the transfer of uridine 5-monophosphate (from uridine 5-triphosphate), a reaction catalyzed by the N-terminal domain.</text>
</comment>
<comment type="catalytic activity">
    <reaction evidence="1">
        <text>alpha-D-glucosamine 1-phosphate + acetyl-CoA = N-acetyl-alpha-D-glucosamine 1-phosphate + CoA + H(+)</text>
        <dbReference type="Rhea" id="RHEA:13725"/>
        <dbReference type="ChEBI" id="CHEBI:15378"/>
        <dbReference type="ChEBI" id="CHEBI:57287"/>
        <dbReference type="ChEBI" id="CHEBI:57288"/>
        <dbReference type="ChEBI" id="CHEBI:57776"/>
        <dbReference type="ChEBI" id="CHEBI:58516"/>
        <dbReference type="EC" id="2.3.1.157"/>
    </reaction>
</comment>
<comment type="catalytic activity">
    <reaction evidence="1">
        <text>N-acetyl-alpha-D-glucosamine 1-phosphate + UTP + H(+) = UDP-N-acetyl-alpha-D-glucosamine + diphosphate</text>
        <dbReference type="Rhea" id="RHEA:13509"/>
        <dbReference type="ChEBI" id="CHEBI:15378"/>
        <dbReference type="ChEBI" id="CHEBI:33019"/>
        <dbReference type="ChEBI" id="CHEBI:46398"/>
        <dbReference type="ChEBI" id="CHEBI:57705"/>
        <dbReference type="ChEBI" id="CHEBI:57776"/>
        <dbReference type="EC" id="2.7.7.23"/>
    </reaction>
</comment>
<comment type="cofactor">
    <cofactor evidence="1">
        <name>Mg(2+)</name>
        <dbReference type="ChEBI" id="CHEBI:18420"/>
    </cofactor>
    <text evidence="1">Binds 1 Mg(2+) ion per subunit.</text>
</comment>
<comment type="pathway">
    <text evidence="1">Nucleotide-sugar biosynthesis; UDP-N-acetyl-alpha-D-glucosamine biosynthesis; N-acetyl-alpha-D-glucosamine 1-phosphate from alpha-D-glucosamine 6-phosphate (route II): step 2/2.</text>
</comment>
<comment type="pathway">
    <text evidence="1">Nucleotide-sugar biosynthesis; UDP-N-acetyl-alpha-D-glucosamine biosynthesis; UDP-N-acetyl-alpha-D-glucosamine from N-acetyl-alpha-D-glucosamine 1-phosphate: step 1/1.</text>
</comment>
<comment type="pathway">
    <text evidence="1">Bacterial outer membrane biogenesis; LPS lipid A biosynthesis.</text>
</comment>
<comment type="subunit">
    <text evidence="1">Homotrimer.</text>
</comment>
<comment type="subcellular location">
    <subcellularLocation>
        <location evidence="1">Cytoplasm</location>
    </subcellularLocation>
</comment>
<comment type="similarity">
    <text evidence="1">In the N-terminal section; belongs to the N-acetylglucosamine-1-phosphate uridyltransferase family.</text>
</comment>
<comment type="similarity">
    <text evidence="1">In the C-terminal section; belongs to the transferase hexapeptide repeat family.</text>
</comment>
<organism>
    <name type="scientific">Sinorhizobium fredii (strain NBRC 101917 / NGR234)</name>
    <dbReference type="NCBI Taxonomy" id="394"/>
    <lineage>
        <taxon>Bacteria</taxon>
        <taxon>Pseudomonadati</taxon>
        <taxon>Pseudomonadota</taxon>
        <taxon>Alphaproteobacteria</taxon>
        <taxon>Hyphomicrobiales</taxon>
        <taxon>Rhizobiaceae</taxon>
        <taxon>Sinorhizobium/Ensifer group</taxon>
        <taxon>Sinorhizobium</taxon>
    </lineage>
</organism>
<name>GLMU_SINFN</name>
<protein>
    <recommendedName>
        <fullName evidence="1">Bifunctional protein GlmU</fullName>
    </recommendedName>
    <domain>
        <recommendedName>
            <fullName evidence="1">UDP-N-acetylglucosamine pyrophosphorylase</fullName>
            <ecNumber evidence="1">2.7.7.23</ecNumber>
        </recommendedName>
        <alternativeName>
            <fullName evidence="1">N-acetylglucosamine-1-phosphate uridyltransferase</fullName>
        </alternativeName>
    </domain>
    <domain>
        <recommendedName>
            <fullName evidence="1">Glucosamine-1-phosphate N-acetyltransferase</fullName>
            <ecNumber evidence="1">2.3.1.157</ecNumber>
        </recommendedName>
    </domain>
</protein>
<proteinExistence type="inferred from homology"/>
<reference key="1">
    <citation type="journal article" date="2009" name="Appl. Environ. Microbiol.">
        <title>Rhizobium sp. strain NGR234 possesses a remarkable number of secretion systems.</title>
        <authorList>
            <person name="Schmeisser C."/>
            <person name="Liesegang H."/>
            <person name="Krysciak D."/>
            <person name="Bakkou N."/>
            <person name="Le Quere A."/>
            <person name="Wollherr A."/>
            <person name="Heinemeyer I."/>
            <person name="Morgenstern B."/>
            <person name="Pommerening-Roeser A."/>
            <person name="Flores M."/>
            <person name="Palacios R."/>
            <person name="Brenner S."/>
            <person name="Gottschalk G."/>
            <person name="Schmitz R.A."/>
            <person name="Broughton W.J."/>
            <person name="Perret X."/>
            <person name="Strittmatter A.W."/>
            <person name="Streit W.R."/>
        </authorList>
    </citation>
    <scope>NUCLEOTIDE SEQUENCE [LARGE SCALE GENOMIC DNA]</scope>
    <source>
        <strain>NBRC 101917 / NGR234</strain>
    </source>
</reference>
<sequence length="456" mass="47930">MERTCLAIILAAGESTRMKSAMSKVLHPVAGRPMIAHVVDALASASITDVALVVGRDAEAVSTAASTGSVTVSSFLQKERLGTAHAVLAARAAIEKGYDDVLVVFGDTPLITAAPLTAARERLAEGNDVVVIGFETADPTGYGRLIVKDGELLAIREHKDASEEERRITYCNGGLMAISGSKALDLLGRIGNANVKGEYYLTDLVEIVRSLGGRAIAVEAPEEELTGCNTRAELAYIERLWQQRRRQELMLAGVSMVAPETVFLAWDTELAEDVLVEPNVVFGPGVRVESGAVIHAFSHVEGAHVRAGATVGPFARLRPGADLGPKSKVGNFCEVKKAEIGAGAKVNHLTYIGDAFVGAGSNIGAGTITCNYDGVNKHVTRIGENTFIGSNASLVAPVSIGSGALVASGSVITEDVPADAVAFGRARQEIKPGRAPILRQRYEAEKAARKKVKAAE</sequence>
<accession>C3MCF7</accession>